<evidence type="ECO:0000255" key="1"/>
<evidence type="ECO:0000305" key="2"/>
<name>Y2456_MYCTU</name>
<protein>
    <recommendedName>
        <fullName>Uncharacterized MFS-type transporter Rv2456c</fullName>
    </recommendedName>
</protein>
<comment type="subcellular location">
    <subcellularLocation>
        <location evidence="2">Cell membrane</location>
        <topology evidence="2">Multi-pass membrane protein</topology>
    </subcellularLocation>
</comment>
<comment type="similarity">
    <text evidence="2">Belongs to the major facilitator superfamily.</text>
</comment>
<sequence>MSGTVVAVPPRVARALDLLNFSLADVRDGLGPYLSIYLLLIHDWDQASIGFVMAVGGIAAIVAQTPIGALVDRTTAKRALVVAGAVLVTAAAVAMPLFAGLYSISVLQAVTGIASSVFAPALAAITLGAVGPQFFARRIGRNEAFNHAGNASAAGATGALAYFFGPVVVFWVLAGMALISVLATLRIPPDAVDHDLARGMDHAPGEPHPQPSRFTVLAHNRELVIFGAAVVAFHFANAAMLPLVGELLALHNRDEGTALMSSCIVAAQVVMVPVAYVVGTRADAWGRKPIFLVGFAVLTARGFLYTLSDNSYWLVGVQLLDGIGAGIFGALFPLVVQDVTHGTGHFNISLGAVTTATGIGAALSNLVAGWIVVVAGYDAAFMSLGALAGAGFLLYLVAMPETVDSDVRVRSRPTLGGK</sequence>
<gene>
    <name type="ordered locus">Rv2456c</name>
</gene>
<dbReference type="EMBL" id="AL123456">
    <property type="protein sequence ID" value="CCP45249.1"/>
    <property type="molecule type" value="Genomic_DNA"/>
</dbReference>
<dbReference type="PIR" id="G70864">
    <property type="entry name" value="G70864"/>
</dbReference>
<dbReference type="RefSeq" id="NP_216972.1">
    <property type="nucleotide sequence ID" value="NC_000962.3"/>
</dbReference>
<dbReference type="RefSeq" id="WP_003412631.1">
    <property type="nucleotide sequence ID" value="NZ_NVQJ01000024.1"/>
</dbReference>
<dbReference type="SMR" id="P9WJX1"/>
<dbReference type="STRING" id="83332.Rv2456c"/>
<dbReference type="PaxDb" id="83332-Rv2456c"/>
<dbReference type="DNASU" id="887340"/>
<dbReference type="GeneID" id="887340"/>
<dbReference type="KEGG" id="mtu:Rv2456c"/>
<dbReference type="KEGG" id="mtv:RVBD_2456c"/>
<dbReference type="TubercuList" id="Rv2456c"/>
<dbReference type="eggNOG" id="COG2814">
    <property type="taxonomic scope" value="Bacteria"/>
</dbReference>
<dbReference type="InParanoid" id="P9WJX1"/>
<dbReference type="OrthoDB" id="9812574at2"/>
<dbReference type="PhylomeDB" id="P9WJX1"/>
<dbReference type="Proteomes" id="UP000001584">
    <property type="component" value="Chromosome"/>
</dbReference>
<dbReference type="GO" id="GO:0005886">
    <property type="term" value="C:plasma membrane"/>
    <property type="evidence" value="ECO:0007669"/>
    <property type="project" value="UniProtKB-SubCell"/>
</dbReference>
<dbReference type="GO" id="GO:0022857">
    <property type="term" value="F:transmembrane transporter activity"/>
    <property type="evidence" value="ECO:0007669"/>
    <property type="project" value="InterPro"/>
</dbReference>
<dbReference type="Gene3D" id="1.20.1250.20">
    <property type="entry name" value="MFS general substrate transporter like domains"/>
    <property type="match status" value="2"/>
</dbReference>
<dbReference type="InterPro" id="IPR011701">
    <property type="entry name" value="MFS"/>
</dbReference>
<dbReference type="InterPro" id="IPR020846">
    <property type="entry name" value="MFS_dom"/>
</dbReference>
<dbReference type="InterPro" id="IPR036259">
    <property type="entry name" value="MFS_trans_sf"/>
</dbReference>
<dbReference type="PANTHER" id="PTHR23539:SF1">
    <property type="entry name" value="MAJOR FACILITATOR SUPERFAMILY (MFS) PROFILE DOMAIN-CONTAINING PROTEIN"/>
    <property type="match status" value="1"/>
</dbReference>
<dbReference type="PANTHER" id="PTHR23539">
    <property type="entry name" value="MFS TRANSPORTER"/>
    <property type="match status" value="1"/>
</dbReference>
<dbReference type="Pfam" id="PF07690">
    <property type="entry name" value="MFS_1"/>
    <property type="match status" value="1"/>
</dbReference>
<dbReference type="SUPFAM" id="SSF103473">
    <property type="entry name" value="MFS general substrate transporter"/>
    <property type="match status" value="1"/>
</dbReference>
<dbReference type="PROSITE" id="PS50850">
    <property type="entry name" value="MFS"/>
    <property type="match status" value="2"/>
</dbReference>
<organism>
    <name type="scientific">Mycobacterium tuberculosis (strain ATCC 25618 / H37Rv)</name>
    <dbReference type="NCBI Taxonomy" id="83332"/>
    <lineage>
        <taxon>Bacteria</taxon>
        <taxon>Bacillati</taxon>
        <taxon>Actinomycetota</taxon>
        <taxon>Actinomycetes</taxon>
        <taxon>Mycobacteriales</taxon>
        <taxon>Mycobacteriaceae</taxon>
        <taxon>Mycobacterium</taxon>
        <taxon>Mycobacterium tuberculosis complex</taxon>
    </lineage>
</organism>
<proteinExistence type="evidence at protein level"/>
<reference key="1">
    <citation type="journal article" date="1998" name="Nature">
        <title>Deciphering the biology of Mycobacterium tuberculosis from the complete genome sequence.</title>
        <authorList>
            <person name="Cole S.T."/>
            <person name="Brosch R."/>
            <person name="Parkhill J."/>
            <person name="Garnier T."/>
            <person name="Churcher C.M."/>
            <person name="Harris D.E."/>
            <person name="Gordon S.V."/>
            <person name="Eiglmeier K."/>
            <person name="Gas S."/>
            <person name="Barry C.E. III"/>
            <person name="Tekaia F."/>
            <person name="Badcock K."/>
            <person name="Basham D."/>
            <person name="Brown D."/>
            <person name="Chillingworth T."/>
            <person name="Connor R."/>
            <person name="Davies R.M."/>
            <person name="Devlin K."/>
            <person name="Feltwell T."/>
            <person name="Gentles S."/>
            <person name="Hamlin N."/>
            <person name="Holroyd S."/>
            <person name="Hornsby T."/>
            <person name="Jagels K."/>
            <person name="Krogh A."/>
            <person name="McLean J."/>
            <person name="Moule S."/>
            <person name="Murphy L.D."/>
            <person name="Oliver S."/>
            <person name="Osborne J."/>
            <person name="Quail M.A."/>
            <person name="Rajandream M.A."/>
            <person name="Rogers J."/>
            <person name="Rutter S."/>
            <person name="Seeger K."/>
            <person name="Skelton S."/>
            <person name="Squares S."/>
            <person name="Squares R."/>
            <person name="Sulston J.E."/>
            <person name="Taylor K."/>
            <person name="Whitehead S."/>
            <person name="Barrell B.G."/>
        </authorList>
    </citation>
    <scope>NUCLEOTIDE SEQUENCE [LARGE SCALE GENOMIC DNA]</scope>
    <source>
        <strain>ATCC 25618 / H37Rv</strain>
    </source>
</reference>
<reference key="2">
    <citation type="journal article" date="2011" name="Mol. Cell. Proteomics">
        <title>Proteogenomic analysis of Mycobacterium tuberculosis by high resolution mass spectrometry.</title>
        <authorList>
            <person name="Kelkar D.S."/>
            <person name="Kumar D."/>
            <person name="Kumar P."/>
            <person name="Balakrishnan L."/>
            <person name="Muthusamy B."/>
            <person name="Yadav A.K."/>
            <person name="Shrivastava P."/>
            <person name="Marimuthu A."/>
            <person name="Anand S."/>
            <person name="Sundaram H."/>
            <person name="Kingsbury R."/>
            <person name="Harsha H.C."/>
            <person name="Nair B."/>
            <person name="Prasad T.S."/>
            <person name="Chauhan D.S."/>
            <person name="Katoch K."/>
            <person name="Katoch V.M."/>
            <person name="Kumar P."/>
            <person name="Chaerkady R."/>
            <person name="Ramachandran S."/>
            <person name="Dash D."/>
            <person name="Pandey A."/>
        </authorList>
    </citation>
    <scope>IDENTIFICATION BY MASS SPECTROMETRY [LARGE SCALE ANALYSIS]</scope>
    <source>
        <strain>ATCC 25618 / H37Rv</strain>
    </source>
</reference>
<accession>P9WJX1</accession>
<accession>L0TB98</accession>
<accession>O53183</accession>
<accession>Q7D741</accession>
<keyword id="KW-1003">Cell membrane</keyword>
<keyword id="KW-0472">Membrane</keyword>
<keyword id="KW-1185">Reference proteome</keyword>
<keyword id="KW-0812">Transmembrane</keyword>
<keyword id="KW-1133">Transmembrane helix</keyword>
<keyword id="KW-0813">Transport</keyword>
<feature type="chain" id="PRO_0000390684" description="Uncharacterized MFS-type transporter Rv2456c">
    <location>
        <begin position="1"/>
        <end position="418"/>
    </location>
</feature>
<feature type="transmembrane region" description="Helical" evidence="1">
    <location>
        <begin position="51"/>
        <end position="71"/>
    </location>
</feature>
<feature type="transmembrane region" description="Helical" evidence="1">
    <location>
        <begin position="79"/>
        <end position="99"/>
    </location>
</feature>
<feature type="transmembrane region" description="Helical" evidence="1">
    <location>
        <begin position="110"/>
        <end position="130"/>
    </location>
</feature>
<feature type="transmembrane region" description="Helical" evidence="1">
    <location>
        <begin position="163"/>
        <end position="183"/>
    </location>
</feature>
<feature type="transmembrane region" description="Helical" evidence="1">
    <location>
        <begin position="224"/>
        <end position="244"/>
    </location>
</feature>
<feature type="transmembrane region" description="Helical" evidence="1">
    <location>
        <begin position="258"/>
        <end position="278"/>
    </location>
</feature>
<feature type="transmembrane region" description="Helical" evidence="1">
    <location>
        <begin position="289"/>
        <end position="309"/>
    </location>
</feature>
<feature type="transmembrane region" description="Helical" evidence="1">
    <location>
        <begin position="315"/>
        <end position="335"/>
    </location>
</feature>
<feature type="transmembrane region" description="Helical" evidence="1">
    <location>
        <begin position="356"/>
        <end position="376"/>
    </location>
</feature>
<feature type="transmembrane region" description="Helical" evidence="1">
    <location>
        <begin position="379"/>
        <end position="399"/>
    </location>
</feature>